<gene>
    <name evidence="1" type="primary">metK</name>
    <name type="ordered locus">YpsIP31758_0841</name>
</gene>
<proteinExistence type="inferred from homology"/>
<protein>
    <recommendedName>
        <fullName evidence="1">S-adenosylmethionine synthase</fullName>
        <shortName evidence="1">AdoMet synthase</shortName>
        <ecNumber evidence="1">2.5.1.6</ecNumber>
    </recommendedName>
    <alternativeName>
        <fullName evidence="1">MAT</fullName>
    </alternativeName>
    <alternativeName>
        <fullName evidence="1">Methionine adenosyltransferase</fullName>
    </alternativeName>
</protein>
<name>METK_YERP3</name>
<keyword id="KW-0067">ATP-binding</keyword>
<keyword id="KW-0963">Cytoplasm</keyword>
<keyword id="KW-0460">Magnesium</keyword>
<keyword id="KW-0479">Metal-binding</keyword>
<keyword id="KW-0547">Nucleotide-binding</keyword>
<keyword id="KW-0554">One-carbon metabolism</keyword>
<keyword id="KW-0630">Potassium</keyword>
<keyword id="KW-0808">Transferase</keyword>
<organism>
    <name type="scientific">Yersinia pseudotuberculosis serotype O:1b (strain IP 31758)</name>
    <dbReference type="NCBI Taxonomy" id="349747"/>
    <lineage>
        <taxon>Bacteria</taxon>
        <taxon>Pseudomonadati</taxon>
        <taxon>Pseudomonadota</taxon>
        <taxon>Gammaproteobacteria</taxon>
        <taxon>Enterobacterales</taxon>
        <taxon>Yersiniaceae</taxon>
        <taxon>Yersinia</taxon>
    </lineage>
</organism>
<evidence type="ECO:0000255" key="1">
    <source>
        <dbReference type="HAMAP-Rule" id="MF_00086"/>
    </source>
</evidence>
<comment type="function">
    <text evidence="1">Catalyzes the formation of S-adenosylmethionine (AdoMet) from methionine and ATP. The overall synthetic reaction is composed of two sequential steps, AdoMet formation and the subsequent tripolyphosphate hydrolysis which occurs prior to release of AdoMet from the enzyme.</text>
</comment>
<comment type="catalytic activity">
    <reaction evidence="1">
        <text>L-methionine + ATP + H2O = S-adenosyl-L-methionine + phosphate + diphosphate</text>
        <dbReference type="Rhea" id="RHEA:21080"/>
        <dbReference type="ChEBI" id="CHEBI:15377"/>
        <dbReference type="ChEBI" id="CHEBI:30616"/>
        <dbReference type="ChEBI" id="CHEBI:33019"/>
        <dbReference type="ChEBI" id="CHEBI:43474"/>
        <dbReference type="ChEBI" id="CHEBI:57844"/>
        <dbReference type="ChEBI" id="CHEBI:59789"/>
        <dbReference type="EC" id="2.5.1.6"/>
    </reaction>
</comment>
<comment type="cofactor">
    <cofactor evidence="1">
        <name>Mg(2+)</name>
        <dbReference type="ChEBI" id="CHEBI:18420"/>
    </cofactor>
    <text evidence="1">Binds 2 divalent ions per subunit.</text>
</comment>
<comment type="cofactor">
    <cofactor evidence="1">
        <name>K(+)</name>
        <dbReference type="ChEBI" id="CHEBI:29103"/>
    </cofactor>
    <text evidence="1">Binds 1 potassium ion per subunit.</text>
</comment>
<comment type="pathway">
    <text evidence="1">Amino-acid biosynthesis; S-adenosyl-L-methionine biosynthesis; S-adenosyl-L-methionine from L-methionine: step 1/1.</text>
</comment>
<comment type="subunit">
    <text evidence="1">Homotetramer; dimer of dimers.</text>
</comment>
<comment type="subcellular location">
    <subcellularLocation>
        <location evidence="1">Cytoplasm</location>
    </subcellularLocation>
</comment>
<comment type="similarity">
    <text evidence="1">Belongs to the AdoMet synthase family.</text>
</comment>
<sequence length="384" mass="42020">MAKHLFTSESVSEGHPDKIADQISDAVLDAILEQDPKARVACETYVKTGMVLVGGEVTTNAWVDIEEITRRTIREIGYVHSDMGFDANSCAVLSAIGKQSPDINQGVDRENPLEQGAGDQGLMFGYATNETSVLMPAPITYAHRLVERQAEVRKNGALPWLRPDAKSQVTFQYDDGKIVGIDAVVLSTQHSEDINQKDLHEAVMEEIIKPVLPAEWITAHTKYFINPTGRFVIGGPMGDCGLTGRKIIVDTYGGMARHGGGAFSGKDPSKVDRSAAYAARYVAKNIVAAGLADRCEIQVSYAIGVAEPTSIMVEAFGTEKIPADQLTLLVREFFDLRPYGLIKMLDLLHPIYRETAAYGHFGREHFPWEKTDKAALLRDAAGLK</sequence>
<dbReference type="EC" id="2.5.1.6" evidence="1"/>
<dbReference type="EMBL" id="CP000720">
    <property type="protein sequence ID" value="ABS47302.1"/>
    <property type="molecule type" value="Genomic_DNA"/>
</dbReference>
<dbReference type="RefSeq" id="WP_002209971.1">
    <property type="nucleotide sequence ID" value="NC_009708.1"/>
</dbReference>
<dbReference type="SMR" id="A7FEZ7"/>
<dbReference type="GeneID" id="57973710"/>
<dbReference type="KEGG" id="ypi:YpsIP31758_0841"/>
<dbReference type="HOGENOM" id="CLU_041802_1_1_6"/>
<dbReference type="UniPathway" id="UPA00315">
    <property type="reaction ID" value="UER00080"/>
</dbReference>
<dbReference type="Proteomes" id="UP000002412">
    <property type="component" value="Chromosome"/>
</dbReference>
<dbReference type="GO" id="GO:0005737">
    <property type="term" value="C:cytoplasm"/>
    <property type="evidence" value="ECO:0007669"/>
    <property type="project" value="UniProtKB-SubCell"/>
</dbReference>
<dbReference type="GO" id="GO:0005524">
    <property type="term" value="F:ATP binding"/>
    <property type="evidence" value="ECO:0007669"/>
    <property type="project" value="UniProtKB-UniRule"/>
</dbReference>
<dbReference type="GO" id="GO:0000287">
    <property type="term" value="F:magnesium ion binding"/>
    <property type="evidence" value="ECO:0007669"/>
    <property type="project" value="UniProtKB-UniRule"/>
</dbReference>
<dbReference type="GO" id="GO:0004478">
    <property type="term" value="F:methionine adenosyltransferase activity"/>
    <property type="evidence" value="ECO:0007669"/>
    <property type="project" value="UniProtKB-UniRule"/>
</dbReference>
<dbReference type="GO" id="GO:0006730">
    <property type="term" value="P:one-carbon metabolic process"/>
    <property type="evidence" value="ECO:0007669"/>
    <property type="project" value="UniProtKB-KW"/>
</dbReference>
<dbReference type="GO" id="GO:0006556">
    <property type="term" value="P:S-adenosylmethionine biosynthetic process"/>
    <property type="evidence" value="ECO:0007669"/>
    <property type="project" value="UniProtKB-UniRule"/>
</dbReference>
<dbReference type="CDD" id="cd18079">
    <property type="entry name" value="S-AdoMet_synt"/>
    <property type="match status" value="1"/>
</dbReference>
<dbReference type="FunFam" id="3.30.300.10:FF:000001">
    <property type="entry name" value="S-adenosylmethionine synthase"/>
    <property type="match status" value="1"/>
</dbReference>
<dbReference type="FunFam" id="3.30.300.10:FF:000003">
    <property type="entry name" value="S-adenosylmethionine synthase"/>
    <property type="match status" value="1"/>
</dbReference>
<dbReference type="Gene3D" id="3.30.300.10">
    <property type="match status" value="3"/>
</dbReference>
<dbReference type="HAMAP" id="MF_00086">
    <property type="entry name" value="S_AdoMet_synth1"/>
    <property type="match status" value="1"/>
</dbReference>
<dbReference type="InterPro" id="IPR022631">
    <property type="entry name" value="ADOMET_SYNTHASE_CS"/>
</dbReference>
<dbReference type="InterPro" id="IPR022630">
    <property type="entry name" value="S-AdoMet_synt_C"/>
</dbReference>
<dbReference type="InterPro" id="IPR022629">
    <property type="entry name" value="S-AdoMet_synt_central"/>
</dbReference>
<dbReference type="InterPro" id="IPR022628">
    <property type="entry name" value="S-AdoMet_synt_N"/>
</dbReference>
<dbReference type="InterPro" id="IPR002133">
    <property type="entry name" value="S-AdoMet_synthetase"/>
</dbReference>
<dbReference type="InterPro" id="IPR022636">
    <property type="entry name" value="S-AdoMet_synthetase_sfam"/>
</dbReference>
<dbReference type="NCBIfam" id="TIGR01034">
    <property type="entry name" value="metK"/>
    <property type="match status" value="1"/>
</dbReference>
<dbReference type="PANTHER" id="PTHR11964">
    <property type="entry name" value="S-ADENOSYLMETHIONINE SYNTHETASE"/>
    <property type="match status" value="1"/>
</dbReference>
<dbReference type="Pfam" id="PF02773">
    <property type="entry name" value="S-AdoMet_synt_C"/>
    <property type="match status" value="1"/>
</dbReference>
<dbReference type="Pfam" id="PF02772">
    <property type="entry name" value="S-AdoMet_synt_M"/>
    <property type="match status" value="1"/>
</dbReference>
<dbReference type="Pfam" id="PF00438">
    <property type="entry name" value="S-AdoMet_synt_N"/>
    <property type="match status" value="1"/>
</dbReference>
<dbReference type="PIRSF" id="PIRSF000497">
    <property type="entry name" value="MAT"/>
    <property type="match status" value="1"/>
</dbReference>
<dbReference type="SUPFAM" id="SSF55973">
    <property type="entry name" value="S-adenosylmethionine synthetase"/>
    <property type="match status" value="3"/>
</dbReference>
<dbReference type="PROSITE" id="PS00376">
    <property type="entry name" value="ADOMET_SYNTHASE_1"/>
    <property type="match status" value="1"/>
</dbReference>
<dbReference type="PROSITE" id="PS00377">
    <property type="entry name" value="ADOMET_SYNTHASE_2"/>
    <property type="match status" value="1"/>
</dbReference>
<reference key="1">
    <citation type="journal article" date="2007" name="PLoS Genet.">
        <title>The complete genome sequence of Yersinia pseudotuberculosis IP31758, the causative agent of Far East scarlet-like fever.</title>
        <authorList>
            <person name="Eppinger M."/>
            <person name="Rosovitz M.J."/>
            <person name="Fricke W.F."/>
            <person name="Rasko D.A."/>
            <person name="Kokorina G."/>
            <person name="Fayolle C."/>
            <person name="Lindler L.E."/>
            <person name="Carniel E."/>
            <person name="Ravel J."/>
        </authorList>
    </citation>
    <scope>NUCLEOTIDE SEQUENCE [LARGE SCALE GENOMIC DNA]</scope>
    <source>
        <strain>IP 31758</strain>
    </source>
</reference>
<feature type="chain" id="PRO_1000057566" description="S-adenosylmethionine synthase">
    <location>
        <begin position="1"/>
        <end position="384"/>
    </location>
</feature>
<feature type="region of interest" description="Flexible loop" evidence="1">
    <location>
        <begin position="99"/>
        <end position="109"/>
    </location>
</feature>
<feature type="binding site" description="in other chain" evidence="1">
    <location>
        <position position="15"/>
    </location>
    <ligand>
        <name>ATP</name>
        <dbReference type="ChEBI" id="CHEBI:30616"/>
        <note>ligand shared between two neighboring subunits</note>
    </ligand>
</feature>
<feature type="binding site" evidence="1">
    <location>
        <position position="17"/>
    </location>
    <ligand>
        <name>Mg(2+)</name>
        <dbReference type="ChEBI" id="CHEBI:18420"/>
    </ligand>
</feature>
<feature type="binding site" evidence="1">
    <location>
        <position position="43"/>
    </location>
    <ligand>
        <name>K(+)</name>
        <dbReference type="ChEBI" id="CHEBI:29103"/>
    </ligand>
</feature>
<feature type="binding site" description="in other chain" evidence="1">
    <location>
        <position position="56"/>
    </location>
    <ligand>
        <name>L-methionine</name>
        <dbReference type="ChEBI" id="CHEBI:57844"/>
        <note>ligand shared between two neighboring subunits</note>
    </ligand>
</feature>
<feature type="binding site" description="in other chain" evidence="1">
    <location>
        <position position="99"/>
    </location>
    <ligand>
        <name>L-methionine</name>
        <dbReference type="ChEBI" id="CHEBI:57844"/>
        <note>ligand shared between two neighboring subunits</note>
    </ligand>
</feature>
<feature type="binding site" description="in other chain" evidence="1">
    <location>
        <begin position="164"/>
        <end position="166"/>
    </location>
    <ligand>
        <name>ATP</name>
        <dbReference type="ChEBI" id="CHEBI:30616"/>
        <note>ligand shared between two neighboring subunits</note>
    </ligand>
</feature>
<feature type="binding site" description="in other chain" evidence="1">
    <location>
        <begin position="230"/>
        <end position="231"/>
    </location>
    <ligand>
        <name>ATP</name>
        <dbReference type="ChEBI" id="CHEBI:30616"/>
        <note>ligand shared between two neighboring subunits</note>
    </ligand>
</feature>
<feature type="binding site" evidence="1">
    <location>
        <position position="239"/>
    </location>
    <ligand>
        <name>ATP</name>
        <dbReference type="ChEBI" id="CHEBI:30616"/>
        <note>ligand shared between two neighboring subunits</note>
    </ligand>
</feature>
<feature type="binding site" evidence="1">
    <location>
        <position position="239"/>
    </location>
    <ligand>
        <name>L-methionine</name>
        <dbReference type="ChEBI" id="CHEBI:57844"/>
        <note>ligand shared between two neighboring subunits</note>
    </ligand>
</feature>
<feature type="binding site" description="in other chain" evidence="1">
    <location>
        <begin position="245"/>
        <end position="246"/>
    </location>
    <ligand>
        <name>ATP</name>
        <dbReference type="ChEBI" id="CHEBI:30616"/>
        <note>ligand shared between two neighboring subunits</note>
    </ligand>
</feature>
<feature type="binding site" evidence="1">
    <location>
        <position position="262"/>
    </location>
    <ligand>
        <name>ATP</name>
        <dbReference type="ChEBI" id="CHEBI:30616"/>
        <note>ligand shared between two neighboring subunits</note>
    </ligand>
</feature>
<feature type="binding site" evidence="1">
    <location>
        <position position="266"/>
    </location>
    <ligand>
        <name>ATP</name>
        <dbReference type="ChEBI" id="CHEBI:30616"/>
        <note>ligand shared between two neighboring subunits</note>
    </ligand>
</feature>
<feature type="binding site" description="in other chain" evidence="1">
    <location>
        <position position="270"/>
    </location>
    <ligand>
        <name>L-methionine</name>
        <dbReference type="ChEBI" id="CHEBI:57844"/>
        <note>ligand shared between two neighboring subunits</note>
    </ligand>
</feature>
<accession>A7FEZ7</accession>